<evidence type="ECO:0000255" key="1">
    <source>
        <dbReference type="HAMAP-Rule" id="MF_00338"/>
    </source>
</evidence>
<gene>
    <name type="ordered locus">BCE_1095</name>
</gene>
<name>YA95_BACC1</name>
<protein>
    <recommendedName>
        <fullName evidence="1">UPF0145 protein BCE_1095</fullName>
    </recommendedName>
</protein>
<sequence>MIVTTTSGIQGKEIIEYIDIVNGEAIMGANIVRDLFASVRDVVGGRAGSYESKLKEARDIAMDEMKELAKQKGANAIVGIDVDYEVVRDGMLMVAVSGTAVRI</sequence>
<accession>Q73CH0</accession>
<dbReference type="EMBL" id="AE017194">
    <property type="protein sequence ID" value="AAS40026.1"/>
    <property type="molecule type" value="Genomic_DNA"/>
</dbReference>
<dbReference type="SMR" id="Q73CH0"/>
<dbReference type="KEGG" id="bca:BCE_1095"/>
<dbReference type="HOGENOM" id="CLU_117144_3_2_9"/>
<dbReference type="Proteomes" id="UP000002527">
    <property type="component" value="Chromosome"/>
</dbReference>
<dbReference type="Gene3D" id="3.30.110.70">
    <property type="entry name" value="Hypothetical protein apc22750. Chain B"/>
    <property type="match status" value="1"/>
</dbReference>
<dbReference type="HAMAP" id="MF_00338">
    <property type="entry name" value="UPF0145"/>
    <property type="match status" value="1"/>
</dbReference>
<dbReference type="InterPro" id="IPR035439">
    <property type="entry name" value="UPF0145_dom_sf"/>
</dbReference>
<dbReference type="InterPro" id="IPR002765">
    <property type="entry name" value="UPF0145_YbjQ-like"/>
</dbReference>
<dbReference type="NCBIfam" id="NF009495">
    <property type="entry name" value="PRK12855.1"/>
    <property type="match status" value="1"/>
</dbReference>
<dbReference type="NCBIfam" id="NF009496">
    <property type="entry name" value="PRK12856.1"/>
    <property type="match status" value="1"/>
</dbReference>
<dbReference type="PANTHER" id="PTHR34068">
    <property type="entry name" value="UPF0145 PROTEIN YBJQ"/>
    <property type="match status" value="1"/>
</dbReference>
<dbReference type="PANTHER" id="PTHR34068:SF1">
    <property type="entry name" value="UPF0145 PROTEIN YBJQ"/>
    <property type="match status" value="1"/>
</dbReference>
<dbReference type="Pfam" id="PF01906">
    <property type="entry name" value="YbjQ_1"/>
    <property type="match status" value="1"/>
</dbReference>
<dbReference type="SUPFAM" id="SSF117782">
    <property type="entry name" value="YbjQ-like"/>
    <property type="match status" value="1"/>
</dbReference>
<reference key="1">
    <citation type="journal article" date="2004" name="Nucleic Acids Res.">
        <title>The genome sequence of Bacillus cereus ATCC 10987 reveals metabolic adaptations and a large plasmid related to Bacillus anthracis pXO1.</title>
        <authorList>
            <person name="Rasko D.A."/>
            <person name="Ravel J."/>
            <person name="Oekstad O.A."/>
            <person name="Helgason E."/>
            <person name="Cer R.Z."/>
            <person name="Jiang L."/>
            <person name="Shores K.A."/>
            <person name="Fouts D.E."/>
            <person name="Tourasse N.J."/>
            <person name="Angiuoli S.V."/>
            <person name="Kolonay J.F."/>
            <person name="Nelson W.C."/>
            <person name="Kolstoe A.-B."/>
            <person name="Fraser C.M."/>
            <person name="Read T.D."/>
        </authorList>
    </citation>
    <scope>NUCLEOTIDE SEQUENCE [LARGE SCALE GENOMIC DNA]</scope>
    <source>
        <strain>ATCC 10987 / NRS 248</strain>
    </source>
</reference>
<proteinExistence type="inferred from homology"/>
<comment type="similarity">
    <text evidence="1">Belongs to the UPF0145 family.</text>
</comment>
<organism>
    <name type="scientific">Bacillus cereus (strain ATCC 10987 / NRS 248)</name>
    <dbReference type="NCBI Taxonomy" id="222523"/>
    <lineage>
        <taxon>Bacteria</taxon>
        <taxon>Bacillati</taxon>
        <taxon>Bacillota</taxon>
        <taxon>Bacilli</taxon>
        <taxon>Bacillales</taxon>
        <taxon>Bacillaceae</taxon>
        <taxon>Bacillus</taxon>
        <taxon>Bacillus cereus group</taxon>
    </lineage>
</organism>
<feature type="chain" id="PRO_0000225802" description="UPF0145 protein BCE_1095">
    <location>
        <begin position="1"/>
        <end position="103"/>
    </location>
</feature>